<proteinExistence type="evidence at protein level"/>
<accession>Q9LZF1</accession>
<organism>
    <name type="scientific">Arabidopsis thaliana</name>
    <name type="common">Mouse-ear cress</name>
    <dbReference type="NCBI Taxonomy" id="3702"/>
    <lineage>
        <taxon>Eukaryota</taxon>
        <taxon>Viridiplantae</taxon>
        <taxon>Streptophyta</taxon>
        <taxon>Embryophyta</taxon>
        <taxon>Tracheophyta</taxon>
        <taxon>Spermatophyta</taxon>
        <taxon>Magnoliopsida</taxon>
        <taxon>eudicotyledons</taxon>
        <taxon>Gunneridae</taxon>
        <taxon>Pentapetalae</taxon>
        <taxon>rosids</taxon>
        <taxon>malvids</taxon>
        <taxon>Brassicales</taxon>
        <taxon>Brassicaceae</taxon>
        <taxon>Camelineae</taxon>
        <taxon>Arabidopsis</taxon>
    </lineage>
</organism>
<evidence type="ECO:0000250" key="1">
    <source>
        <dbReference type="UniProtKB" id="Q9SZN7"/>
    </source>
</evidence>
<evidence type="ECO:0000255" key="2">
    <source>
        <dbReference type="PROSITE-ProRule" id="PRU00280"/>
    </source>
</evidence>
<evidence type="ECO:0000256" key="3">
    <source>
        <dbReference type="SAM" id="MobiDB-lite"/>
    </source>
</evidence>
<evidence type="ECO:0000269" key="4">
    <source>
    </source>
</evidence>
<evidence type="ECO:0000303" key="5">
    <source>
    </source>
</evidence>
<evidence type="ECO:0000303" key="6">
    <source>
    </source>
</evidence>
<evidence type="ECO:0000303" key="7">
    <source>
    </source>
</evidence>
<evidence type="ECO:0000305" key="8"/>
<evidence type="ECO:0000312" key="9">
    <source>
        <dbReference type="Araport" id="AT5G03380"/>
    </source>
</evidence>
<evidence type="ECO:0000312" key="10">
    <source>
        <dbReference type="EMBL" id="CAB83295.1"/>
    </source>
</evidence>
<sequence length="392" mass="42263">MGEKKEETATKPQGEKKPTDGGITTVVMKLDMHCEGCGKKIKRIFKHFKGVEDVKIDYKSNKLTVIGNVDPVEVRDKVADKIKRPVELVSTVAPPKKETPPSSGGAEKKPSPAAEEKPAEKKPAAVEKPGEKKEEKKKEEGEKKASPPPPPKESTVVLKTKLHCEGCEHKIKRIVNKIKGVNSVAIDSAKDLVIVKGIIDVKQLTPYLNEKLKRTVEVVPAKKDDGAPVAAAAAAPAGGEKKDKVAGEKKEIKDVGEKKVDGGGEKKKEVAVGGGGGGGGGGGDGGAMDVKKSEYNGYGYPPQPMYYYPEGQVYGQQHYMMQGQSSQSYVQEPYSNQGYVQESYMNQGYGQGYGQEAPPPPYMNQQGYADPYGHMRAPELFSDENPNGCSVM</sequence>
<feature type="chain" id="PRO_0000437801" description="Heavy metal-associated isoprenylated plant protein 6">
    <location>
        <begin position="1"/>
        <end position="389"/>
    </location>
</feature>
<feature type="propeptide" id="PRO_0000437802" description="Removed in mature form" evidence="8">
    <location>
        <begin position="390"/>
        <end position="392"/>
    </location>
</feature>
<feature type="domain" description="HMA 1" evidence="2">
    <location>
        <begin position="23"/>
        <end position="86"/>
    </location>
</feature>
<feature type="domain" description="HMA 2" evidence="2">
    <location>
        <begin position="153"/>
        <end position="216"/>
    </location>
</feature>
<feature type="region of interest" description="Disordered" evidence="3">
    <location>
        <begin position="1"/>
        <end position="22"/>
    </location>
</feature>
<feature type="region of interest" description="Disordered" evidence="3">
    <location>
        <begin position="89"/>
        <end position="157"/>
    </location>
</feature>
<feature type="region of interest" description="Disordered" evidence="3">
    <location>
        <begin position="258"/>
        <end position="285"/>
    </location>
</feature>
<feature type="region of interest" description="Disordered" evidence="3">
    <location>
        <begin position="350"/>
        <end position="392"/>
    </location>
</feature>
<feature type="compositionally biased region" description="Basic and acidic residues" evidence="3">
    <location>
        <begin position="1"/>
        <end position="19"/>
    </location>
</feature>
<feature type="compositionally biased region" description="Basic and acidic residues" evidence="3">
    <location>
        <begin position="106"/>
        <end position="145"/>
    </location>
</feature>
<feature type="compositionally biased region" description="Basic and acidic residues" evidence="3">
    <location>
        <begin position="258"/>
        <end position="270"/>
    </location>
</feature>
<feature type="compositionally biased region" description="Gly residues" evidence="3">
    <location>
        <begin position="272"/>
        <end position="285"/>
    </location>
</feature>
<feature type="binding site" evidence="2 4">
    <location>
        <position position="34"/>
    </location>
    <ligand>
        <name>Cd(2+)</name>
        <dbReference type="ChEBI" id="CHEBI:48775"/>
        <label>1</label>
    </ligand>
</feature>
<feature type="binding site" evidence="2 4">
    <location>
        <position position="37"/>
    </location>
    <ligand>
        <name>Cd(2+)</name>
        <dbReference type="ChEBI" id="CHEBI:48775"/>
        <label>1</label>
    </ligand>
</feature>
<feature type="binding site" evidence="2 4">
    <location>
        <position position="164"/>
    </location>
    <ligand>
        <name>Cd(2+)</name>
        <dbReference type="ChEBI" id="CHEBI:48775"/>
        <label>2</label>
    </ligand>
</feature>
<feature type="binding site" evidence="2 4">
    <location>
        <position position="167"/>
    </location>
    <ligand>
        <name>Cd(2+)</name>
        <dbReference type="ChEBI" id="CHEBI:48775"/>
        <label>2</label>
    </ligand>
</feature>
<feature type="modified residue" description="Cysteine methyl ester" evidence="1">
    <location>
        <position position="389"/>
    </location>
</feature>
<feature type="lipid moiety-binding region" description="S-farnesyl cysteine" evidence="1">
    <location>
        <position position="389"/>
    </location>
</feature>
<feature type="mutagenesis site" description="Loss of metal binding; when associated with G-37; G-164 and G-167." evidence="4">
    <original>C</original>
    <variation>G</variation>
    <location>
        <position position="34"/>
    </location>
</feature>
<feature type="mutagenesis site" description="Loss of metal binding; when associated with G-34; G-164 and G-167." evidence="4">
    <original>C</original>
    <variation>G</variation>
    <location>
        <position position="37"/>
    </location>
</feature>
<feature type="mutagenesis site" description="Loss of metal binding; when associated with G-34; G-37 and G-167." evidence="4">
    <original>C</original>
    <variation>G</variation>
    <location>
        <position position="164"/>
    </location>
</feature>
<feature type="mutagenesis site" description="Loss of metal binding; when associated with G-34; G-37 and G-164." evidence="4">
    <original>C</original>
    <variation>G</variation>
    <location>
        <position position="167"/>
    </location>
</feature>
<feature type="mutagenesis site" description="Loss of plasma membrane localization." evidence="4">
    <original>C</original>
    <variation>G</variation>
    <location>
        <position position="389"/>
    </location>
</feature>
<name>HIP6_ARATH</name>
<gene>
    <name evidence="6 7" type="primary">HIPP06</name>
    <name evidence="5" type="synonym">CDI19</name>
    <name evidence="9" type="ordered locus">At5g03380</name>
    <name evidence="10" type="ORF">F12E4_120</name>
</gene>
<reference key="1">
    <citation type="journal article" date="2002" name="Plant J.">
        <title>Functional characterization of a heavy metal binding protein CdI19 from Arabidopsis.</title>
        <authorList>
            <person name="Suzuki N."/>
            <person name="Yamaguchi Y."/>
            <person name="Koizumi N."/>
            <person name="Sano H."/>
        </authorList>
    </citation>
    <scope>NUCLEOTIDE SEQUENCE [MRNA]</scope>
    <scope>FUNCTION</scope>
    <scope>INDUCTION</scope>
    <scope>TISSUE SPECIFICITY</scope>
    <scope>SUBCELLULAR LOCATION</scope>
    <scope>MUTAGENESIS OF CYS-34; CYS-37; CYS-164; CYS-167 AND CYS-389</scope>
</reference>
<reference key="2">
    <citation type="journal article" date="2000" name="Nature">
        <title>Sequence and analysis of chromosome 5 of the plant Arabidopsis thaliana.</title>
        <authorList>
            <person name="Tabata S."/>
            <person name="Kaneko T."/>
            <person name="Nakamura Y."/>
            <person name="Kotani H."/>
            <person name="Kato T."/>
            <person name="Asamizu E."/>
            <person name="Miyajima N."/>
            <person name="Sasamoto S."/>
            <person name="Kimura T."/>
            <person name="Hosouchi T."/>
            <person name="Kawashima K."/>
            <person name="Kohara M."/>
            <person name="Matsumoto M."/>
            <person name="Matsuno A."/>
            <person name="Muraki A."/>
            <person name="Nakayama S."/>
            <person name="Nakazaki N."/>
            <person name="Naruo K."/>
            <person name="Okumura S."/>
            <person name="Shinpo S."/>
            <person name="Takeuchi C."/>
            <person name="Wada T."/>
            <person name="Watanabe A."/>
            <person name="Yamada M."/>
            <person name="Yasuda M."/>
            <person name="Sato S."/>
            <person name="de la Bastide M."/>
            <person name="Huang E."/>
            <person name="Spiegel L."/>
            <person name="Gnoj L."/>
            <person name="O'Shaughnessy A."/>
            <person name="Preston R."/>
            <person name="Habermann K."/>
            <person name="Murray J."/>
            <person name="Johnson D."/>
            <person name="Rohlfing T."/>
            <person name="Nelson J."/>
            <person name="Stoneking T."/>
            <person name="Pepin K."/>
            <person name="Spieth J."/>
            <person name="Sekhon M."/>
            <person name="Armstrong J."/>
            <person name="Becker M."/>
            <person name="Belter E."/>
            <person name="Cordum H."/>
            <person name="Cordes M."/>
            <person name="Courtney L."/>
            <person name="Courtney W."/>
            <person name="Dante M."/>
            <person name="Du H."/>
            <person name="Edwards J."/>
            <person name="Fryman J."/>
            <person name="Haakensen B."/>
            <person name="Lamar E."/>
            <person name="Latreille P."/>
            <person name="Leonard S."/>
            <person name="Meyer R."/>
            <person name="Mulvaney E."/>
            <person name="Ozersky P."/>
            <person name="Riley A."/>
            <person name="Strowmatt C."/>
            <person name="Wagner-McPherson C."/>
            <person name="Wollam A."/>
            <person name="Yoakum M."/>
            <person name="Bell M."/>
            <person name="Dedhia N."/>
            <person name="Parnell L."/>
            <person name="Shah R."/>
            <person name="Rodriguez M."/>
            <person name="Hoon See L."/>
            <person name="Vil D."/>
            <person name="Baker J."/>
            <person name="Kirchoff K."/>
            <person name="Toth K."/>
            <person name="King L."/>
            <person name="Bahret A."/>
            <person name="Miller B."/>
            <person name="Marra M.A."/>
            <person name="Martienssen R."/>
            <person name="McCombie W.R."/>
            <person name="Wilson R.K."/>
            <person name="Murphy G."/>
            <person name="Bancroft I."/>
            <person name="Volckaert G."/>
            <person name="Wambutt R."/>
            <person name="Duesterhoeft A."/>
            <person name="Stiekema W."/>
            <person name="Pohl T."/>
            <person name="Entian K.-D."/>
            <person name="Terryn N."/>
            <person name="Hartley N."/>
            <person name="Bent E."/>
            <person name="Johnson S."/>
            <person name="Langham S.-A."/>
            <person name="McCullagh B."/>
            <person name="Robben J."/>
            <person name="Grymonprez B."/>
            <person name="Zimmermann W."/>
            <person name="Ramsperger U."/>
            <person name="Wedler H."/>
            <person name="Balke K."/>
            <person name="Wedler E."/>
            <person name="Peters S."/>
            <person name="van Staveren M."/>
            <person name="Dirkse W."/>
            <person name="Mooijman P."/>
            <person name="Klein Lankhorst R."/>
            <person name="Weitzenegger T."/>
            <person name="Bothe G."/>
            <person name="Rose M."/>
            <person name="Hauf J."/>
            <person name="Berneiser S."/>
            <person name="Hempel S."/>
            <person name="Feldpausch M."/>
            <person name="Lamberth S."/>
            <person name="Villarroel R."/>
            <person name="Gielen J."/>
            <person name="Ardiles W."/>
            <person name="Bents O."/>
            <person name="Lemcke K."/>
            <person name="Kolesov G."/>
            <person name="Mayer K.F.X."/>
            <person name="Rudd S."/>
            <person name="Schoof H."/>
            <person name="Schueller C."/>
            <person name="Zaccaria P."/>
            <person name="Mewes H.-W."/>
            <person name="Bevan M."/>
            <person name="Fransz P.F."/>
        </authorList>
    </citation>
    <scope>NUCLEOTIDE SEQUENCE [LARGE SCALE GENOMIC DNA]</scope>
    <source>
        <strain>cv. Columbia</strain>
    </source>
</reference>
<reference key="3">
    <citation type="journal article" date="2017" name="Plant J.">
        <title>Araport11: a complete reannotation of the Arabidopsis thaliana reference genome.</title>
        <authorList>
            <person name="Cheng C.Y."/>
            <person name="Krishnakumar V."/>
            <person name="Chan A.P."/>
            <person name="Thibaud-Nissen F."/>
            <person name="Schobel S."/>
            <person name="Town C.D."/>
        </authorList>
    </citation>
    <scope>GENOME REANNOTATION</scope>
    <source>
        <strain>cv. Columbia</strain>
    </source>
</reference>
<reference key="4">
    <citation type="journal article" date="2003" name="Science">
        <title>Empirical analysis of transcriptional activity in the Arabidopsis genome.</title>
        <authorList>
            <person name="Yamada K."/>
            <person name="Lim J."/>
            <person name="Dale J.M."/>
            <person name="Chen H."/>
            <person name="Shinn P."/>
            <person name="Palm C.J."/>
            <person name="Southwick A.M."/>
            <person name="Wu H.C."/>
            <person name="Kim C.J."/>
            <person name="Nguyen M."/>
            <person name="Pham P.K."/>
            <person name="Cheuk R.F."/>
            <person name="Karlin-Newmann G."/>
            <person name="Liu S.X."/>
            <person name="Lam B."/>
            <person name="Sakano H."/>
            <person name="Wu T."/>
            <person name="Yu G."/>
            <person name="Miranda M."/>
            <person name="Quach H.L."/>
            <person name="Tripp M."/>
            <person name="Chang C.H."/>
            <person name="Lee J.M."/>
            <person name="Toriumi M.J."/>
            <person name="Chan M.M."/>
            <person name="Tang C.C."/>
            <person name="Onodera C.S."/>
            <person name="Deng J.M."/>
            <person name="Akiyama K."/>
            <person name="Ansari Y."/>
            <person name="Arakawa T."/>
            <person name="Banh J."/>
            <person name="Banno F."/>
            <person name="Bowser L."/>
            <person name="Brooks S.Y."/>
            <person name="Carninci P."/>
            <person name="Chao Q."/>
            <person name="Choy N."/>
            <person name="Enju A."/>
            <person name="Goldsmith A.D."/>
            <person name="Gurjal M."/>
            <person name="Hansen N.F."/>
            <person name="Hayashizaki Y."/>
            <person name="Johnson-Hopson C."/>
            <person name="Hsuan V.W."/>
            <person name="Iida K."/>
            <person name="Karnes M."/>
            <person name="Khan S."/>
            <person name="Koesema E."/>
            <person name="Ishida J."/>
            <person name="Jiang P.X."/>
            <person name="Jones T."/>
            <person name="Kawai J."/>
            <person name="Kamiya A."/>
            <person name="Meyers C."/>
            <person name="Nakajima M."/>
            <person name="Narusaka M."/>
            <person name="Seki M."/>
            <person name="Sakurai T."/>
            <person name="Satou M."/>
            <person name="Tamse R."/>
            <person name="Vaysberg M."/>
            <person name="Wallender E.K."/>
            <person name="Wong C."/>
            <person name="Yamamura Y."/>
            <person name="Yuan S."/>
            <person name="Shinozaki K."/>
            <person name="Davis R.W."/>
            <person name="Theologis A."/>
            <person name="Ecker J.R."/>
        </authorList>
    </citation>
    <scope>NUCLEOTIDE SEQUENCE [LARGE SCALE MRNA]</scope>
    <source>
        <strain>cv. Columbia</strain>
    </source>
</reference>
<reference key="5">
    <citation type="journal article" date="2010" name="Metallomics">
        <title>Metallochaperone-like genes in Arabidopsis thaliana.</title>
        <authorList>
            <person name="Tehseen M."/>
            <person name="Cairns N."/>
            <person name="Sherson S."/>
            <person name="Cobbett C.S."/>
        </authorList>
    </citation>
    <scope>GENE FAMILY</scope>
    <scope>NOMENCLATURE</scope>
</reference>
<reference key="6">
    <citation type="journal article" date="2013" name="FEBS J.">
        <title>Heavy metal-associated isoprenylated plant protein (HIPP): characterization of a family of proteins exclusive to plants.</title>
        <authorList>
            <person name="de Abreu-Neto J.B."/>
            <person name="Turchetto-Zolet A.C."/>
            <person name="de Oliveira L.F."/>
            <person name="Zanettini M.H."/>
            <person name="Margis-Pinheiro M."/>
        </authorList>
    </citation>
    <scope>GENE FAMILY</scope>
    <scope>NOMENCLATURE</scope>
</reference>
<comment type="function">
    <text evidence="4">Heavy-metal-binding protein. Involved in the maintenance of heavy metal homeostasis and/or in detoxification.</text>
</comment>
<comment type="subcellular location">
    <subcellularLocation>
        <location evidence="4">Cell membrane</location>
    </subcellularLocation>
</comment>
<comment type="alternative products">
    <event type="alternative splicing"/>
    <isoform>
        <id>Q9LZF1-1</id>
        <name>1</name>
        <sequence type="displayed"/>
    </isoform>
    <text evidence="8">A number of isoforms are produced. According to EST sequences.</text>
</comment>
<comment type="tissue specificity">
    <text evidence="4">Expressed in petioles, hypocotyls, peduncles, vascular bundles and root meristems.</text>
</comment>
<comment type="induction">
    <text evidence="4">Up-regulated by cadmium, Hg, Fe and Cu, but not by Mn or Co.</text>
</comment>
<comment type="similarity">
    <text evidence="8">Belongs to the HIPP family.</text>
</comment>
<keyword id="KW-0025">Alternative splicing</keyword>
<keyword id="KW-0104">Cadmium</keyword>
<keyword id="KW-1003">Cell membrane</keyword>
<keyword id="KW-0449">Lipoprotein</keyword>
<keyword id="KW-0472">Membrane</keyword>
<keyword id="KW-0479">Metal-binding</keyword>
<keyword id="KW-0488">Methylation</keyword>
<keyword id="KW-0636">Prenylation</keyword>
<keyword id="KW-1185">Reference proteome</keyword>
<keyword id="KW-0677">Repeat</keyword>
<protein>
    <recommendedName>
        <fullName evidence="6 7">Heavy metal-associated isoprenylated plant protein 6</fullName>
        <shortName evidence="6 7">AtHIP06</shortName>
    </recommendedName>
    <alternativeName>
        <fullName evidence="5">Cadmium induced protein CdI19</fullName>
    </alternativeName>
</protein>
<dbReference type="EMBL" id="AF517549">
    <property type="protein sequence ID" value="AAM64219.1"/>
    <property type="molecule type" value="mRNA"/>
</dbReference>
<dbReference type="EMBL" id="AL162751">
    <property type="protein sequence ID" value="CAB83295.1"/>
    <property type="molecule type" value="Genomic_DNA"/>
</dbReference>
<dbReference type="EMBL" id="CP002688">
    <property type="protein sequence ID" value="AED90594.1"/>
    <property type="molecule type" value="Genomic_DNA"/>
</dbReference>
<dbReference type="EMBL" id="AY058875">
    <property type="protein sequence ID" value="AAL24262.1"/>
    <property type="molecule type" value="mRNA"/>
</dbReference>
<dbReference type="EMBL" id="AY103305">
    <property type="protein sequence ID" value="AAM65357.1"/>
    <property type="molecule type" value="mRNA"/>
</dbReference>
<dbReference type="PIR" id="T48360">
    <property type="entry name" value="T48360"/>
</dbReference>
<dbReference type="RefSeq" id="NP_195958.1">
    <molecule id="Q9LZF1-1"/>
    <property type="nucleotide sequence ID" value="NM_120417.4"/>
</dbReference>
<dbReference type="SMR" id="Q9LZF1"/>
<dbReference type="FunCoup" id="Q9LZF1">
    <property type="interactions" value="46"/>
</dbReference>
<dbReference type="STRING" id="3702.Q9LZF1"/>
<dbReference type="PaxDb" id="3702-AT5G03380.1"/>
<dbReference type="ProteomicsDB" id="230243">
    <molecule id="Q9LZF1-1"/>
</dbReference>
<dbReference type="EnsemblPlants" id="AT5G03380.1">
    <molecule id="Q9LZF1-1"/>
    <property type="protein sequence ID" value="AT5G03380.1"/>
    <property type="gene ID" value="AT5G03380"/>
</dbReference>
<dbReference type="GeneID" id="831854"/>
<dbReference type="Gramene" id="AT5G03380.1">
    <molecule id="Q9LZF1-1"/>
    <property type="protein sequence ID" value="AT5G03380.1"/>
    <property type="gene ID" value="AT5G03380"/>
</dbReference>
<dbReference type="KEGG" id="ath:AT5G03380"/>
<dbReference type="Araport" id="AT5G03380"/>
<dbReference type="TAIR" id="AT5G03380"/>
<dbReference type="eggNOG" id="KOG1603">
    <property type="taxonomic scope" value="Eukaryota"/>
</dbReference>
<dbReference type="InParanoid" id="Q9LZF1"/>
<dbReference type="OrthoDB" id="773760at2759"/>
<dbReference type="PhylomeDB" id="Q9LZF1"/>
<dbReference type="PRO" id="PR:Q9LZF1"/>
<dbReference type="Proteomes" id="UP000006548">
    <property type="component" value="Chromosome 5"/>
</dbReference>
<dbReference type="ExpressionAtlas" id="Q9LZF1">
    <property type="expression patterns" value="baseline and differential"/>
</dbReference>
<dbReference type="GO" id="GO:0005886">
    <property type="term" value="C:plasma membrane"/>
    <property type="evidence" value="ECO:0007669"/>
    <property type="project" value="UniProtKB-SubCell"/>
</dbReference>
<dbReference type="GO" id="GO:0046872">
    <property type="term" value="F:metal ion binding"/>
    <property type="evidence" value="ECO:0007669"/>
    <property type="project" value="UniProtKB-KW"/>
</dbReference>
<dbReference type="GO" id="GO:0071456">
    <property type="term" value="P:cellular response to hypoxia"/>
    <property type="evidence" value="ECO:0007007"/>
    <property type="project" value="TAIR"/>
</dbReference>
<dbReference type="CDD" id="cd00371">
    <property type="entry name" value="HMA"/>
    <property type="match status" value="2"/>
</dbReference>
<dbReference type="Gene3D" id="3.30.70.100">
    <property type="match status" value="2"/>
</dbReference>
<dbReference type="InterPro" id="IPR044594">
    <property type="entry name" value="HIPP01/3/5/6"/>
</dbReference>
<dbReference type="InterPro" id="IPR006121">
    <property type="entry name" value="HMA_dom"/>
</dbReference>
<dbReference type="InterPro" id="IPR036163">
    <property type="entry name" value="HMA_dom_sf"/>
</dbReference>
<dbReference type="PANTHER" id="PTHR46413">
    <property type="entry name" value="HEAVY METAL-ASSOCIATED ISOPRENYLATED PLANT PROTEIN 6"/>
    <property type="match status" value="1"/>
</dbReference>
<dbReference type="PANTHER" id="PTHR46413:SF1">
    <property type="entry name" value="HEAVY METAL-ASSOCIATED ISOPRENYLATED PLANT PROTEIN 6"/>
    <property type="match status" value="1"/>
</dbReference>
<dbReference type="Pfam" id="PF00403">
    <property type="entry name" value="HMA"/>
    <property type="match status" value="2"/>
</dbReference>
<dbReference type="SUPFAM" id="SSF55008">
    <property type="entry name" value="HMA, heavy metal-associated domain"/>
    <property type="match status" value="2"/>
</dbReference>
<dbReference type="PROSITE" id="PS50846">
    <property type="entry name" value="HMA_2"/>
    <property type="match status" value="2"/>
</dbReference>